<proteinExistence type="inferred from homology"/>
<dbReference type="EC" id="6.1.1.9" evidence="1"/>
<dbReference type="EMBL" id="BA000011">
    <property type="protein sequence ID" value="BAB59174.1"/>
    <property type="molecule type" value="Genomic_DNA"/>
</dbReference>
<dbReference type="RefSeq" id="WP_010916289.1">
    <property type="nucleotide sequence ID" value="NC_002689.2"/>
</dbReference>
<dbReference type="SMR" id="Q97CR9"/>
<dbReference type="STRING" id="273116.gene:9380797"/>
<dbReference type="PaxDb" id="273116-14324246"/>
<dbReference type="GeneID" id="1441518"/>
<dbReference type="KEGG" id="tvo:TVG0034869"/>
<dbReference type="eggNOG" id="arCOG00808">
    <property type="taxonomic scope" value="Archaea"/>
</dbReference>
<dbReference type="HOGENOM" id="CLU_001493_0_2_2"/>
<dbReference type="OrthoDB" id="23906at2157"/>
<dbReference type="PhylomeDB" id="Q97CR9"/>
<dbReference type="Proteomes" id="UP000001017">
    <property type="component" value="Chromosome"/>
</dbReference>
<dbReference type="GO" id="GO:0005829">
    <property type="term" value="C:cytosol"/>
    <property type="evidence" value="ECO:0007669"/>
    <property type="project" value="TreeGrafter"/>
</dbReference>
<dbReference type="GO" id="GO:0002161">
    <property type="term" value="F:aminoacyl-tRNA deacylase activity"/>
    <property type="evidence" value="ECO:0007669"/>
    <property type="project" value="InterPro"/>
</dbReference>
<dbReference type="GO" id="GO:0005524">
    <property type="term" value="F:ATP binding"/>
    <property type="evidence" value="ECO:0007669"/>
    <property type="project" value="UniProtKB-UniRule"/>
</dbReference>
<dbReference type="GO" id="GO:0004832">
    <property type="term" value="F:valine-tRNA ligase activity"/>
    <property type="evidence" value="ECO:0007669"/>
    <property type="project" value="UniProtKB-UniRule"/>
</dbReference>
<dbReference type="GO" id="GO:0006438">
    <property type="term" value="P:valyl-tRNA aminoacylation"/>
    <property type="evidence" value="ECO:0007669"/>
    <property type="project" value="UniProtKB-UniRule"/>
</dbReference>
<dbReference type="CDD" id="cd07962">
    <property type="entry name" value="Anticodon_Ia_Val"/>
    <property type="match status" value="1"/>
</dbReference>
<dbReference type="CDD" id="cd00817">
    <property type="entry name" value="ValRS_core"/>
    <property type="match status" value="1"/>
</dbReference>
<dbReference type="FunFam" id="3.40.50.620:FF:000192">
    <property type="entry name" value="Valine--tRNA ligase"/>
    <property type="match status" value="1"/>
</dbReference>
<dbReference type="Gene3D" id="3.40.50.620">
    <property type="entry name" value="HUPs"/>
    <property type="match status" value="2"/>
</dbReference>
<dbReference type="Gene3D" id="1.10.730.10">
    <property type="entry name" value="Isoleucyl-tRNA Synthetase, Domain 1"/>
    <property type="match status" value="1"/>
</dbReference>
<dbReference type="Gene3D" id="3.90.740.10">
    <property type="entry name" value="Valyl/Leucyl/Isoleucyl-tRNA synthetase, editing domain"/>
    <property type="match status" value="1"/>
</dbReference>
<dbReference type="HAMAP" id="MF_02005">
    <property type="entry name" value="Val_tRNA_synth_type2"/>
    <property type="match status" value="1"/>
</dbReference>
<dbReference type="InterPro" id="IPR001412">
    <property type="entry name" value="aa-tRNA-synth_I_CS"/>
</dbReference>
<dbReference type="InterPro" id="IPR002300">
    <property type="entry name" value="aa-tRNA-synth_Ia"/>
</dbReference>
<dbReference type="InterPro" id="IPR033705">
    <property type="entry name" value="Anticodon_Ia_Val"/>
</dbReference>
<dbReference type="InterPro" id="IPR013155">
    <property type="entry name" value="M/V/L/I-tRNA-synth_anticd-bd"/>
</dbReference>
<dbReference type="InterPro" id="IPR014729">
    <property type="entry name" value="Rossmann-like_a/b/a_fold"/>
</dbReference>
<dbReference type="InterPro" id="IPR009080">
    <property type="entry name" value="tRNAsynth_Ia_anticodon-bd"/>
</dbReference>
<dbReference type="InterPro" id="IPR009008">
    <property type="entry name" value="Val/Leu/Ile-tRNA-synth_edit"/>
</dbReference>
<dbReference type="InterPro" id="IPR022874">
    <property type="entry name" value="Valine-tRNA_ligase_type_2"/>
</dbReference>
<dbReference type="InterPro" id="IPR002303">
    <property type="entry name" value="Valyl-tRNA_ligase"/>
</dbReference>
<dbReference type="NCBIfam" id="NF009687">
    <property type="entry name" value="PRK13208.1"/>
    <property type="match status" value="1"/>
</dbReference>
<dbReference type="NCBIfam" id="TIGR00422">
    <property type="entry name" value="valS"/>
    <property type="match status" value="1"/>
</dbReference>
<dbReference type="PANTHER" id="PTHR11946:SF93">
    <property type="entry name" value="VALINE--TRNA LIGASE, CHLOROPLASTIC_MITOCHONDRIAL 2"/>
    <property type="match status" value="1"/>
</dbReference>
<dbReference type="PANTHER" id="PTHR11946">
    <property type="entry name" value="VALYL-TRNA SYNTHETASES"/>
    <property type="match status" value="1"/>
</dbReference>
<dbReference type="Pfam" id="PF08264">
    <property type="entry name" value="Anticodon_1"/>
    <property type="match status" value="1"/>
</dbReference>
<dbReference type="Pfam" id="PF00133">
    <property type="entry name" value="tRNA-synt_1"/>
    <property type="match status" value="1"/>
</dbReference>
<dbReference type="PRINTS" id="PR00986">
    <property type="entry name" value="TRNASYNTHVAL"/>
</dbReference>
<dbReference type="SUPFAM" id="SSF47323">
    <property type="entry name" value="Anticodon-binding domain of a subclass of class I aminoacyl-tRNA synthetases"/>
    <property type="match status" value="1"/>
</dbReference>
<dbReference type="SUPFAM" id="SSF52374">
    <property type="entry name" value="Nucleotidylyl transferase"/>
    <property type="match status" value="1"/>
</dbReference>
<dbReference type="SUPFAM" id="SSF50677">
    <property type="entry name" value="ValRS/IleRS/LeuRS editing domain"/>
    <property type="match status" value="1"/>
</dbReference>
<dbReference type="PROSITE" id="PS00178">
    <property type="entry name" value="AA_TRNA_LIGASE_I"/>
    <property type="match status" value="1"/>
</dbReference>
<reference key="1">
    <citation type="journal article" date="2000" name="Proc. Natl. Acad. Sci. U.S.A.">
        <title>Archaeal adaptation to higher temperatures revealed by genomic sequence of Thermoplasma volcanium.</title>
        <authorList>
            <person name="Kawashima T."/>
            <person name="Amano N."/>
            <person name="Koike H."/>
            <person name="Makino S."/>
            <person name="Higuchi S."/>
            <person name="Kawashima-Ohya Y."/>
            <person name="Watanabe K."/>
            <person name="Yamazaki M."/>
            <person name="Kanehori K."/>
            <person name="Kawamoto T."/>
            <person name="Nunoshiba T."/>
            <person name="Yamamoto Y."/>
            <person name="Aramaki H."/>
            <person name="Makino K."/>
            <person name="Suzuki M."/>
        </authorList>
    </citation>
    <scope>NUCLEOTIDE SEQUENCE [LARGE SCALE GENOMIC DNA]</scope>
    <source>
        <strain>ATCC 51530 / DSM 4299 / JCM 9571 / NBRC 15438 / GSS1</strain>
    </source>
</reference>
<organism>
    <name type="scientific">Thermoplasma volcanium (strain ATCC 51530 / DSM 4299 / JCM 9571 / NBRC 15438 / GSS1)</name>
    <dbReference type="NCBI Taxonomy" id="273116"/>
    <lineage>
        <taxon>Archaea</taxon>
        <taxon>Methanobacteriati</taxon>
        <taxon>Thermoplasmatota</taxon>
        <taxon>Thermoplasmata</taxon>
        <taxon>Thermoplasmatales</taxon>
        <taxon>Thermoplasmataceae</taxon>
        <taxon>Thermoplasma</taxon>
    </lineage>
</organism>
<feature type="chain" id="PRO_0000224638" description="Valine--tRNA ligase">
    <location>
        <begin position="1"/>
        <end position="790"/>
    </location>
</feature>
<feature type="short sequence motif" description="'HIGH' region">
    <location>
        <begin position="40"/>
        <end position="50"/>
    </location>
</feature>
<feature type="short sequence motif" description="'KMSKS' region">
    <location>
        <begin position="521"/>
        <end position="525"/>
    </location>
</feature>
<feature type="binding site" evidence="1">
    <location>
        <position position="524"/>
    </location>
    <ligand>
        <name>ATP</name>
        <dbReference type="ChEBI" id="CHEBI:30616"/>
    </ligand>
</feature>
<sequence length="790" mass="91205">MDLDIDQMEKKWLKYWEDNDIYTFIPSEREKVFTIDTPPPTVSGKMHMGHSFSYSHIDFIARYKRMRGYHVFFPWGFDDNGLATERYVEKETGIKPTDGNVEHFINLCREFSQASEKALIEGWKRMGMSCYFKDYYVTSSPESVKISQSMFLDLVKKNRVYRDLAPTIRCPTCKTSISQIEMKDEMLKSKLVYINFDVEGSKLTIATSRPELLGSCVALFVNNEDERYKNIIGREATVPLFGHKVPIMGDESIDKDFGTGAEMVCTFGDQNDLDLWKKYSLPLRISIDKDGKMNENAGPLNGLSINDGRKKIIELLKSEGFVVKEEDIKHSVNTHERCGTPVEIFIEKQWFIRYLDLKKDFIDSGRAVKWIPDYMRTRYENWVNGLKWDWCISRQRYYGVPFPVWYCSDCGNTVFADDKDLPVDPRLQPPSKRCDKCGSSNLVPERDVMDTWATSSLTPRIALSHFGLFDKYYPEDLRGQGHDIISFWAFTTIARSKIHDNTIPWLTLMISGNVFDMYGEKMSKSKGNIVDIYAITDKYGADALRFWASTVSQGEDIRVKEQDFVRGRRTVIKMYNANRLIDILRNGRPLKNVDEPKHPVNLWILTEESKVVKLVTDSMDNYEVSKARSALDVFFWNTFCDNYLEMIKAIVQAANEKNDLGTVDETIYTASKVMRDVVKMYAPIMPFITEEIYQSIEIEGKKKSVHIDCWPMENREYVEASEVRYVTSIIDKIRAAKSNAKVSVGTPVRKALIKCNASIAEKYRDMLSRMMRIGSIDIEDSDKLEVSVEP</sequence>
<protein>
    <recommendedName>
        <fullName evidence="1">Valine--tRNA ligase</fullName>
        <ecNumber evidence="1">6.1.1.9</ecNumber>
    </recommendedName>
    <alternativeName>
        <fullName evidence="1">Valyl-tRNA synthetase</fullName>
        <shortName evidence="1">ValRS</shortName>
    </alternativeName>
</protein>
<evidence type="ECO:0000255" key="1">
    <source>
        <dbReference type="HAMAP-Rule" id="MF_02005"/>
    </source>
</evidence>
<accession>Q97CR9</accession>
<name>SYV_THEVO</name>
<keyword id="KW-0030">Aminoacyl-tRNA synthetase</keyword>
<keyword id="KW-0067">ATP-binding</keyword>
<keyword id="KW-0963">Cytoplasm</keyword>
<keyword id="KW-0436">Ligase</keyword>
<keyword id="KW-0547">Nucleotide-binding</keyword>
<keyword id="KW-0648">Protein biosynthesis</keyword>
<gene>
    <name evidence="1" type="primary">valS</name>
    <name type="ordered locus">TV0032</name>
    <name type="ORF">TVG0034869</name>
</gene>
<comment type="function">
    <text evidence="1">Catalyzes the attachment of valine to tRNA(Val). As ValRS can inadvertently accommodate and process structurally similar amino acids such as threonine, to avoid such errors, it has a 'posttransfer' editing activity that hydrolyzes mischarged Thr-tRNA(Val) in a tRNA-dependent manner.</text>
</comment>
<comment type="catalytic activity">
    <reaction evidence="1">
        <text>tRNA(Val) + L-valine + ATP = L-valyl-tRNA(Val) + AMP + diphosphate</text>
        <dbReference type="Rhea" id="RHEA:10704"/>
        <dbReference type="Rhea" id="RHEA-COMP:9672"/>
        <dbReference type="Rhea" id="RHEA-COMP:9708"/>
        <dbReference type="ChEBI" id="CHEBI:30616"/>
        <dbReference type="ChEBI" id="CHEBI:33019"/>
        <dbReference type="ChEBI" id="CHEBI:57762"/>
        <dbReference type="ChEBI" id="CHEBI:78442"/>
        <dbReference type="ChEBI" id="CHEBI:78537"/>
        <dbReference type="ChEBI" id="CHEBI:456215"/>
        <dbReference type="EC" id="6.1.1.9"/>
    </reaction>
</comment>
<comment type="subcellular location">
    <subcellularLocation>
        <location evidence="1">Cytoplasm</location>
    </subcellularLocation>
</comment>
<comment type="domain">
    <text evidence="1">ValRS has two distinct active sites: one for aminoacylation and one for editing. The misactivated threonine is translocated from the active site to the editing site.</text>
</comment>
<comment type="similarity">
    <text evidence="1">Belongs to the class-I aminoacyl-tRNA synthetase family. ValS type 2 subfamily.</text>
</comment>